<name>BGAL_ECOLX</name>
<protein>
    <recommendedName>
        <fullName evidence="1">Beta-galactosidase</fullName>
        <shortName evidence="1">Beta-gal</shortName>
        <ecNumber evidence="1">3.2.1.23</ecNumber>
    </recommendedName>
    <alternativeName>
        <fullName evidence="1">Lactase</fullName>
    </alternativeName>
</protein>
<sequence length="1029" mass="116967">MTMITPSFPGNSLAVVLQRRDWENPGVTQLNRLAAHPPFASWRNSEEARTDRPSQQLRSLNGEWRFAWFPAPEAVPESWLECDLPEADTVVVPSNWQMHGYDAPIYTNVTYPITVNPPFVPTENPTGCYSLTFNVDESWLQEGQTRIIFDGVNSAFHLWCNGRWVGYGQDSRLPSEFDLSAFLRAGENRLAVMVLRWSDGSYLEDQDMWRMSGIFRDVSLLHKPTTQISDFHVATRFNDDFSRAVLEAEVQMCGELRDYLRVTVSLWQGETQVASGTAPFGGEIIDERGGYADRVTLRLNVENPKLWSAEIPNLYRAVVELHTADGTLIEAEACDVGFREVRIENGLLLLNGKPLLIRGVNRHEHHPLHGQVMDEQTMVQDILLMKQNNFNAVRCSHYPNHPLWYTLCDRYGLYVVDEANIETHGMVPMNRLTDDPRWLPAMSERVTRMVQRDRNHPSVIIWSLGNESGHGANHDALYRWIKSVDPSRPVQYEGGGADTTATDIICPMYARVDEDQPFPAVPKWSIKKWLSLPGETRPLILCEYAHAMGNSLGGFAKYWQAFRQYPRLQGGFVWDWVDQSLIKYDENGNPWSAYGGDFGDTPNDRQFCMNGLVFADRTPHPALTEAKHQQQFFQFRLSGQTIEVTSEYLFRHSDNELLHWMVALDGKPLASGEVPLDVAPQGKQLIELPELPQPESAGQLWLTVRVVQPNATAWSEAGHISAWQQWRLAENLSVTLPAASHAIPHLTTSEMDFCIELGNKRWQFNRQSGFLSQMWIGDKKQLLTPLRDQFTRAPLDNDIGVSEATRIDPNAWVERWKAAGHYQAEAALLQCTADTLADAVLITTAHAWQHQGKTLFISRKTYRIDGSGQMAITVDVEVASDTPHPARIGLNCQLAQVAERVNWLGLGPQENYPDRLTAACFDRWDLPLSDMYTPYVFPSENGLRCGTRELNYGPHQWRGDFQFNISRYSQQQLMETSHRHLLHAEEGTWLNIDGFHMGIGGDDSWSPSVSAEFQLSAGRYHYQLVWCQK</sequence>
<feature type="chain" id="PRO_0000366988" description="Beta-galactosidase">
    <location>
        <begin position="1"/>
        <end position="1029"/>
    </location>
</feature>
<feature type="active site" description="Proton donor" evidence="1">
    <location>
        <position position="467"/>
    </location>
</feature>
<feature type="active site" description="Nucleophile" evidence="1">
    <location>
        <position position="543"/>
    </location>
</feature>
<feature type="binding site" evidence="1">
    <location>
        <position position="108"/>
    </location>
    <ligand>
        <name>substrate</name>
    </ligand>
</feature>
<feature type="binding site" evidence="1">
    <location>
        <position position="207"/>
    </location>
    <ligand>
        <name>Na(+)</name>
        <dbReference type="ChEBI" id="CHEBI:29101"/>
    </ligand>
</feature>
<feature type="binding site" evidence="1">
    <location>
        <position position="207"/>
    </location>
    <ligand>
        <name>substrate</name>
    </ligand>
</feature>
<feature type="binding site" evidence="1">
    <location>
        <position position="422"/>
    </location>
    <ligand>
        <name>Mg(2+)</name>
        <dbReference type="ChEBI" id="CHEBI:18420"/>
        <label>1</label>
    </ligand>
</feature>
<feature type="binding site" evidence="1">
    <location>
        <position position="424"/>
    </location>
    <ligand>
        <name>Mg(2+)</name>
        <dbReference type="ChEBI" id="CHEBI:18420"/>
        <label>1</label>
    </ligand>
</feature>
<feature type="binding site" evidence="1">
    <location>
        <position position="467"/>
    </location>
    <ligand>
        <name>Mg(2+)</name>
        <dbReference type="ChEBI" id="CHEBI:18420"/>
        <label>1</label>
    </ligand>
</feature>
<feature type="binding site" evidence="1">
    <location>
        <position position="467"/>
    </location>
    <ligand>
        <name>substrate</name>
    </ligand>
</feature>
<feature type="binding site" evidence="1">
    <location>
        <begin position="543"/>
        <end position="546"/>
    </location>
    <ligand>
        <name>substrate</name>
    </ligand>
</feature>
<feature type="binding site" evidence="1">
    <location>
        <position position="603"/>
    </location>
    <ligand>
        <name>Mg(2+)</name>
        <dbReference type="ChEBI" id="CHEBI:18420"/>
        <label>2</label>
    </ligand>
</feature>
<feature type="binding site" evidence="1">
    <location>
        <position position="607"/>
    </location>
    <ligand>
        <name>Na(+)</name>
        <dbReference type="ChEBI" id="CHEBI:29101"/>
    </ligand>
</feature>
<feature type="binding site" evidence="1">
    <location>
        <position position="610"/>
    </location>
    <ligand>
        <name>Na(+)</name>
        <dbReference type="ChEBI" id="CHEBI:29101"/>
    </ligand>
</feature>
<feature type="binding site" evidence="1">
    <location>
        <position position="610"/>
    </location>
    <ligand>
        <name>substrate</name>
    </ligand>
</feature>
<feature type="binding site" evidence="1">
    <location>
        <position position="1005"/>
    </location>
    <ligand>
        <name>substrate</name>
    </ligand>
</feature>
<feature type="site" description="Transition state stabilizer" evidence="1">
    <location>
        <position position="363"/>
    </location>
</feature>
<feature type="site" description="Transition state stabilizer" evidence="1">
    <location>
        <position position="397"/>
    </location>
</feature>
<proteinExistence type="inferred from homology"/>
<organism>
    <name type="scientific">Escherichia coli</name>
    <dbReference type="NCBI Taxonomy" id="562"/>
    <lineage>
        <taxon>Bacteria</taxon>
        <taxon>Pseudomonadati</taxon>
        <taxon>Pseudomonadota</taxon>
        <taxon>Gammaproteobacteria</taxon>
        <taxon>Enterobacterales</taxon>
        <taxon>Enterobacteriaceae</taxon>
        <taxon>Escherichia</taxon>
    </lineage>
</organism>
<accession>Q8VNN2</accession>
<keyword id="KW-0326">Glycosidase</keyword>
<keyword id="KW-0378">Hydrolase</keyword>
<keyword id="KW-0460">Magnesium</keyword>
<keyword id="KW-0479">Metal-binding</keyword>
<keyword id="KW-0614">Plasmid</keyword>
<keyword id="KW-0915">Sodium</keyword>
<comment type="catalytic activity">
    <reaction evidence="1">
        <text>Hydrolysis of terminal non-reducing beta-D-galactose residues in beta-D-galactosides.</text>
        <dbReference type="EC" id="3.2.1.23"/>
    </reaction>
</comment>
<comment type="cofactor">
    <cofactor evidence="1">
        <name>Mg(2+)</name>
        <dbReference type="ChEBI" id="CHEBI:18420"/>
    </cofactor>
    <text evidence="1">Binds 2 magnesium ions per monomer.</text>
</comment>
<comment type="cofactor">
    <cofactor evidence="1">
        <name>Na(+)</name>
        <dbReference type="ChEBI" id="CHEBI:29101"/>
    </cofactor>
    <text evidence="1">Binds 1 sodium ion per monomer.</text>
</comment>
<comment type="subunit">
    <text evidence="1">Homotetramer.</text>
</comment>
<comment type="similarity">
    <text evidence="1">Belongs to the glycosyl hydrolase 2 family.</text>
</comment>
<dbReference type="EC" id="3.2.1.23" evidence="1"/>
<dbReference type="EMBL" id="AJ308295">
    <property type="protein sequence ID" value="CAC87491.1"/>
    <property type="molecule type" value="Genomic_DNA"/>
</dbReference>
<dbReference type="EMDB" id="EMD-0153"/>
<dbReference type="EMDB" id="EMD-10563"/>
<dbReference type="EMDB" id="EMD-10564"/>
<dbReference type="EMDB" id="EMD-10574"/>
<dbReference type="EMDB" id="EMD-4415"/>
<dbReference type="SMR" id="Q8VNN2"/>
<dbReference type="STRING" id="585034.ECIAI1_0345"/>
<dbReference type="BindingDB" id="Q8VNN2"/>
<dbReference type="ChEMBL" id="CHEMBL1293264"/>
<dbReference type="DrugCentral" id="Q8VNN2"/>
<dbReference type="CAZy" id="GH2">
    <property type="family name" value="Glycoside Hydrolase Family 2"/>
</dbReference>
<dbReference type="eggNOG" id="COG3250">
    <property type="taxonomic scope" value="Bacteria"/>
</dbReference>
<dbReference type="EvolutionaryTrace" id="Q8VNN2"/>
<dbReference type="GO" id="GO:0009341">
    <property type="term" value="C:beta-galactosidase complex"/>
    <property type="evidence" value="ECO:0007669"/>
    <property type="project" value="InterPro"/>
</dbReference>
<dbReference type="GO" id="GO:0004565">
    <property type="term" value="F:beta-galactosidase activity"/>
    <property type="evidence" value="ECO:0007669"/>
    <property type="project" value="UniProtKB-EC"/>
</dbReference>
<dbReference type="GO" id="GO:0030246">
    <property type="term" value="F:carbohydrate binding"/>
    <property type="evidence" value="ECO:0007669"/>
    <property type="project" value="InterPro"/>
</dbReference>
<dbReference type="GO" id="GO:0000287">
    <property type="term" value="F:magnesium ion binding"/>
    <property type="evidence" value="ECO:0007669"/>
    <property type="project" value="UniProtKB-UniRule"/>
</dbReference>
<dbReference type="GO" id="GO:0005990">
    <property type="term" value="P:lactose catabolic process"/>
    <property type="evidence" value="ECO:0007669"/>
    <property type="project" value="TreeGrafter"/>
</dbReference>
<dbReference type="FunFam" id="2.60.120.260:FF:000058">
    <property type="entry name" value="Beta-galactosidase"/>
    <property type="match status" value="1"/>
</dbReference>
<dbReference type="FunFam" id="2.60.40.10:FF:000680">
    <property type="entry name" value="Beta-galactosidase"/>
    <property type="match status" value="1"/>
</dbReference>
<dbReference type="FunFam" id="2.60.40.10:FF:000850">
    <property type="entry name" value="Beta-galactosidase"/>
    <property type="match status" value="1"/>
</dbReference>
<dbReference type="FunFam" id="2.70.98.10:FF:000006">
    <property type="entry name" value="Beta-galactosidase"/>
    <property type="match status" value="1"/>
</dbReference>
<dbReference type="FunFam" id="3.20.20.80:FF:000018">
    <property type="entry name" value="Beta-galactosidase"/>
    <property type="match status" value="1"/>
</dbReference>
<dbReference type="Gene3D" id="2.70.98.10">
    <property type="match status" value="1"/>
</dbReference>
<dbReference type="Gene3D" id="2.60.120.260">
    <property type="entry name" value="Galactose-binding domain-like"/>
    <property type="match status" value="1"/>
</dbReference>
<dbReference type="Gene3D" id="3.20.20.80">
    <property type="entry name" value="Glycosidases"/>
    <property type="match status" value="1"/>
</dbReference>
<dbReference type="Gene3D" id="2.60.40.10">
    <property type="entry name" value="Immunoglobulins"/>
    <property type="match status" value="2"/>
</dbReference>
<dbReference type="HAMAP" id="MF_01687">
    <property type="entry name" value="Beta_gal"/>
    <property type="match status" value="1"/>
</dbReference>
<dbReference type="InterPro" id="IPR004199">
    <property type="entry name" value="B-gal_small/dom_5"/>
</dbReference>
<dbReference type="InterPro" id="IPR050347">
    <property type="entry name" value="Bact_Beta-galactosidase"/>
</dbReference>
<dbReference type="InterPro" id="IPR036156">
    <property type="entry name" value="Beta-gal/glucu_dom_sf"/>
</dbReference>
<dbReference type="InterPro" id="IPR011013">
    <property type="entry name" value="Gal_mutarotase_sf_dom"/>
</dbReference>
<dbReference type="InterPro" id="IPR008979">
    <property type="entry name" value="Galactose-bd-like_sf"/>
</dbReference>
<dbReference type="InterPro" id="IPR014718">
    <property type="entry name" value="GH-type_carb-bd"/>
</dbReference>
<dbReference type="InterPro" id="IPR006101">
    <property type="entry name" value="Glyco_hydro_2"/>
</dbReference>
<dbReference type="InterPro" id="IPR023232">
    <property type="entry name" value="Glyco_hydro_2_AS"/>
</dbReference>
<dbReference type="InterPro" id="IPR023933">
    <property type="entry name" value="Glyco_hydro_2_beta_Galsidase"/>
</dbReference>
<dbReference type="InterPro" id="IPR006103">
    <property type="entry name" value="Glyco_hydro_2_cat"/>
</dbReference>
<dbReference type="InterPro" id="IPR023230">
    <property type="entry name" value="Glyco_hydro_2_CS"/>
</dbReference>
<dbReference type="InterPro" id="IPR006102">
    <property type="entry name" value="Glyco_hydro_2_Ig-like"/>
</dbReference>
<dbReference type="InterPro" id="IPR006104">
    <property type="entry name" value="Glyco_hydro_2_N"/>
</dbReference>
<dbReference type="InterPro" id="IPR017853">
    <property type="entry name" value="Glycoside_hydrolase_SF"/>
</dbReference>
<dbReference type="InterPro" id="IPR013783">
    <property type="entry name" value="Ig-like_fold"/>
</dbReference>
<dbReference type="InterPro" id="IPR032312">
    <property type="entry name" value="LacZ_4"/>
</dbReference>
<dbReference type="NCBIfam" id="NF007074">
    <property type="entry name" value="PRK09525.1"/>
    <property type="match status" value="1"/>
</dbReference>
<dbReference type="PANTHER" id="PTHR46323">
    <property type="entry name" value="BETA-GALACTOSIDASE"/>
    <property type="match status" value="1"/>
</dbReference>
<dbReference type="PANTHER" id="PTHR46323:SF2">
    <property type="entry name" value="BETA-GALACTOSIDASE"/>
    <property type="match status" value="1"/>
</dbReference>
<dbReference type="Pfam" id="PF02929">
    <property type="entry name" value="Bgal_small_N"/>
    <property type="match status" value="1"/>
</dbReference>
<dbReference type="Pfam" id="PF00703">
    <property type="entry name" value="Glyco_hydro_2"/>
    <property type="match status" value="1"/>
</dbReference>
<dbReference type="Pfam" id="PF02836">
    <property type="entry name" value="Glyco_hydro_2_C"/>
    <property type="match status" value="1"/>
</dbReference>
<dbReference type="Pfam" id="PF02837">
    <property type="entry name" value="Glyco_hydro_2_N"/>
    <property type="match status" value="1"/>
</dbReference>
<dbReference type="Pfam" id="PF16353">
    <property type="entry name" value="LacZ_4"/>
    <property type="match status" value="1"/>
</dbReference>
<dbReference type="PRINTS" id="PR00132">
    <property type="entry name" value="GLHYDRLASE2"/>
</dbReference>
<dbReference type="SMART" id="SM01038">
    <property type="entry name" value="Bgal_small_N"/>
    <property type="match status" value="1"/>
</dbReference>
<dbReference type="SUPFAM" id="SSF51445">
    <property type="entry name" value="(Trans)glycosidases"/>
    <property type="match status" value="1"/>
</dbReference>
<dbReference type="SUPFAM" id="SSF49303">
    <property type="entry name" value="beta-Galactosidase/glucuronidase domain"/>
    <property type="match status" value="2"/>
</dbReference>
<dbReference type="SUPFAM" id="SSF74650">
    <property type="entry name" value="Galactose mutarotase-like"/>
    <property type="match status" value="1"/>
</dbReference>
<dbReference type="SUPFAM" id="SSF49785">
    <property type="entry name" value="Galactose-binding domain-like"/>
    <property type="match status" value="1"/>
</dbReference>
<dbReference type="PROSITE" id="PS00719">
    <property type="entry name" value="GLYCOSYL_HYDROL_F2_1"/>
    <property type="match status" value="1"/>
</dbReference>
<dbReference type="PROSITE" id="PS00608">
    <property type="entry name" value="GLYCOSYL_HYDROL_F2_2"/>
    <property type="match status" value="1"/>
</dbReference>
<geneLocation type="plasmid">
    <name>pMH11</name>
</geneLocation>
<reference key="1">
    <citation type="journal article" date="2002" name="Plasmid">
        <title>pMH11, A tool for gene disruption and expression analysis in Azorhizobium caulinodans.</title>
        <authorList>
            <person name="D'Haeze W."/>
            <person name="Verplancke C."/>
            <person name="Mironov V."/>
            <person name="Holsters M."/>
        </authorList>
    </citation>
    <scope>NUCLEOTIDE SEQUENCE [GENOMIC DNA]</scope>
</reference>
<evidence type="ECO:0000255" key="1">
    <source>
        <dbReference type="HAMAP-Rule" id="MF_01687"/>
    </source>
</evidence>
<gene>
    <name evidence="1" type="primary">lacZ</name>
</gene>